<dbReference type="EMBL" id="M37308">
    <property type="protein sequence ID" value="AAA26455.1"/>
    <property type="molecule type" value="Genomic_DNA"/>
</dbReference>
<dbReference type="EMBL" id="X12757">
    <property type="protein sequence ID" value="CAA31246.1"/>
    <property type="molecule type" value="Genomic_DNA"/>
</dbReference>
<dbReference type="PIR" id="S01147">
    <property type="entry name" value="S01147"/>
</dbReference>
<dbReference type="RefSeq" id="WP_011390994.1">
    <property type="nucleotide sequence ID" value="NZ_NRSC01000093.1"/>
</dbReference>
<dbReference type="SMR" id="P15012"/>
<dbReference type="OMA" id="FFDQFMS"/>
<dbReference type="GO" id="GO:0005886">
    <property type="term" value="C:plasma membrane"/>
    <property type="evidence" value="ECO:0007669"/>
    <property type="project" value="UniProtKB-SubCell"/>
</dbReference>
<dbReference type="GO" id="GO:0045259">
    <property type="term" value="C:proton-transporting ATP synthase complex"/>
    <property type="evidence" value="ECO:0007669"/>
    <property type="project" value="UniProtKB-KW"/>
</dbReference>
<dbReference type="GO" id="GO:0046933">
    <property type="term" value="F:proton-transporting ATP synthase activity, rotational mechanism"/>
    <property type="evidence" value="ECO:0007669"/>
    <property type="project" value="UniProtKB-UniRule"/>
</dbReference>
<dbReference type="CDD" id="cd00310">
    <property type="entry name" value="ATP-synt_Fo_a_6"/>
    <property type="match status" value="1"/>
</dbReference>
<dbReference type="FunFam" id="1.20.120.220:FF:000003">
    <property type="entry name" value="ATP synthase subunit a"/>
    <property type="match status" value="1"/>
</dbReference>
<dbReference type="Gene3D" id="1.20.120.220">
    <property type="entry name" value="ATP synthase, F0 complex, subunit A"/>
    <property type="match status" value="1"/>
</dbReference>
<dbReference type="HAMAP" id="MF_01393">
    <property type="entry name" value="ATP_synth_a_bact"/>
    <property type="match status" value="1"/>
</dbReference>
<dbReference type="InterPro" id="IPR000568">
    <property type="entry name" value="ATP_synth_F0_asu"/>
</dbReference>
<dbReference type="InterPro" id="IPR023011">
    <property type="entry name" value="ATP_synth_F0_asu_AS"/>
</dbReference>
<dbReference type="InterPro" id="IPR045083">
    <property type="entry name" value="ATP_synth_F0_asu_bact/mt"/>
</dbReference>
<dbReference type="InterPro" id="IPR035908">
    <property type="entry name" value="F0_ATP_A_sf"/>
</dbReference>
<dbReference type="NCBIfam" id="TIGR01131">
    <property type="entry name" value="ATP_synt_6_or_A"/>
    <property type="match status" value="1"/>
</dbReference>
<dbReference type="NCBIfam" id="NF004482">
    <property type="entry name" value="PRK05815.2-4"/>
    <property type="match status" value="1"/>
</dbReference>
<dbReference type="PANTHER" id="PTHR11410">
    <property type="entry name" value="ATP SYNTHASE SUBUNIT A"/>
    <property type="match status" value="1"/>
</dbReference>
<dbReference type="PANTHER" id="PTHR11410:SF0">
    <property type="entry name" value="ATP SYNTHASE SUBUNIT A"/>
    <property type="match status" value="1"/>
</dbReference>
<dbReference type="Pfam" id="PF00119">
    <property type="entry name" value="ATP-synt_A"/>
    <property type="match status" value="1"/>
</dbReference>
<dbReference type="PRINTS" id="PR00123">
    <property type="entry name" value="ATPASEA"/>
</dbReference>
<dbReference type="SUPFAM" id="SSF81336">
    <property type="entry name" value="F1F0 ATP synthase subunit A"/>
    <property type="match status" value="1"/>
</dbReference>
<dbReference type="PROSITE" id="PS00449">
    <property type="entry name" value="ATPASE_A"/>
    <property type="match status" value="1"/>
</dbReference>
<protein>
    <recommendedName>
        <fullName evidence="1">ATP synthase subunit a</fullName>
    </recommendedName>
    <alternativeName>
        <fullName evidence="1">ATP synthase F0 sector subunit a</fullName>
    </alternativeName>
    <alternativeName>
        <fullName evidence="1">F-ATPase subunit 6</fullName>
    </alternativeName>
</protein>
<reference key="1">
    <citation type="journal article" date="1988" name="Biochem. J.">
        <title>DNA sequence of a gene cluster coding for subunits of the F0 membrane sector of ATP synthase in Rhodospirillum rubrum. Support for modular evolution of the F1 and F0 sectors.</title>
        <authorList>
            <person name="Falk G."/>
            <person name="Walker J.E."/>
        </authorList>
    </citation>
    <scope>NUCLEOTIDE SEQUENCE [GENOMIC DNA]</scope>
</reference>
<proteinExistence type="inferred from homology"/>
<evidence type="ECO:0000255" key="1">
    <source>
        <dbReference type="HAMAP-Rule" id="MF_01393"/>
    </source>
</evidence>
<gene>
    <name evidence="1" type="primary">atpB</name>
</gene>
<accession>P15012</accession>
<comment type="function">
    <text evidence="1">Key component of the proton channel; it plays a direct role in the translocation of protons across the membrane.</text>
</comment>
<comment type="subunit">
    <text evidence="1">F-type ATPases have 2 components, CF(1) - the catalytic core - and CF(0) - the membrane proton channel. CF(1) has five subunits: alpha(3), beta(3), gamma(1), delta(1), epsilon(1). CF(0) has three main subunits: a(1), b(2) and c(9-12). The alpha and beta chains form an alternating ring which encloses part of the gamma chain. CF(1) is attached to CF(0) by a central stalk formed by the gamma and epsilon chains, while a peripheral stalk is formed by the delta and b chains.</text>
</comment>
<comment type="subcellular location">
    <subcellularLocation>
        <location evidence="1">Cell inner membrane</location>
        <topology evidence="1">Multi-pass membrane protein</topology>
    </subcellularLocation>
</comment>
<comment type="similarity">
    <text evidence="1">Belongs to the ATPase A chain family.</text>
</comment>
<feature type="chain" id="PRO_0000082067" description="ATP synthase subunit a">
    <location>
        <begin position="1"/>
        <end position="241"/>
    </location>
</feature>
<feature type="transmembrane region" description="Helical" evidence="1">
    <location>
        <begin position="23"/>
        <end position="43"/>
    </location>
</feature>
<feature type="transmembrane region" description="Helical" evidence="1">
    <location>
        <begin position="83"/>
        <end position="103"/>
    </location>
</feature>
<feature type="transmembrane region" description="Helical" evidence="1">
    <location>
        <begin position="113"/>
        <end position="133"/>
    </location>
</feature>
<feature type="transmembrane region" description="Helical" evidence="1">
    <location>
        <begin position="188"/>
        <end position="208"/>
    </location>
</feature>
<feature type="transmembrane region" description="Helical" evidence="1">
    <location>
        <begin position="209"/>
        <end position="229"/>
    </location>
</feature>
<keyword id="KW-0066">ATP synthesis</keyword>
<keyword id="KW-0997">Cell inner membrane</keyword>
<keyword id="KW-1003">Cell membrane</keyword>
<keyword id="KW-0138">CF(0)</keyword>
<keyword id="KW-0375">Hydrogen ion transport</keyword>
<keyword id="KW-0406">Ion transport</keyword>
<keyword id="KW-0472">Membrane</keyword>
<keyword id="KW-0812">Transmembrane</keyword>
<keyword id="KW-1133">Transmembrane helix</keyword>
<keyword id="KW-0813">Transport</keyword>
<name>ATP6_RHORU</name>
<organism>
    <name type="scientific">Rhodospirillum rubrum</name>
    <dbReference type="NCBI Taxonomy" id="1085"/>
    <lineage>
        <taxon>Bacteria</taxon>
        <taxon>Pseudomonadati</taxon>
        <taxon>Pseudomonadota</taxon>
        <taxon>Alphaproteobacteria</taxon>
        <taxon>Rhodospirillales</taxon>
        <taxon>Rhodospirillaceae</taxon>
        <taxon>Rhodospirillum</taxon>
    </lineage>
</organism>
<sequence length="241" mass="26498">MHSPVEQFAIKPLVSIQVAGVDVSFTNSSLLMLLTVGLAAAFFWNATARRTLIPGRLQSAAEMLYEFVANMIRDNVGKEGMKYFPYILTLFVFVFLGNMLGMLPYSFTFTSHIAVTAALAVGIFIAVTIIGFARHGFHYFRMFFPHGAPLLTAPLLIPIELISYLSRPFSLSVRLFANMTVGHIMLKVLAGFVIMLGVVGGVVPFAVVLGVTVLEFFIAALQAYVFTILTCIYLNDAINMH</sequence>